<proteinExistence type="inferred from homology"/>
<name>RIMM_WOLWR</name>
<protein>
    <recommendedName>
        <fullName evidence="1">Ribosome maturation factor RimM</fullName>
    </recommendedName>
</protein>
<sequence>MNDNLVCLGIITSPHGIKGAVKVKTFTEKPENISLYGKLISGDENYKIDSVSVIGDNLVIATISGVNSRNEAELLRNKKLYIERSKLPELNDEDEFYQSDLVDMEVRLKSNELYGYVKSVYNFGSGDILEILVISTKKRIMLSFTKEIFPHINIKGRYIVLNIPEFID</sequence>
<organism>
    <name type="scientific">Wolbachia sp. subsp. Drosophila simulans (strain wRi)</name>
    <dbReference type="NCBI Taxonomy" id="66084"/>
    <lineage>
        <taxon>Bacteria</taxon>
        <taxon>Pseudomonadati</taxon>
        <taxon>Pseudomonadota</taxon>
        <taxon>Alphaproteobacteria</taxon>
        <taxon>Rickettsiales</taxon>
        <taxon>Anaplasmataceae</taxon>
        <taxon>Wolbachieae</taxon>
        <taxon>Wolbachia</taxon>
    </lineage>
</organism>
<reference key="1">
    <citation type="journal article" date="2009" name="Proc. Natl. Acad. Sci. U.S.A.">
        <title>The mosaic genome structure of the Wolbachia wRi strain infecting Drosophila simulans.</title>
        <authorList>
            <person name="Klasson L."/>
            <person name="Westberg J."/>
            <person name="Sapountzis P."/>
            <person name="Naeslund K."/>
            <person name="Lutnaes Y."/>
            <person name="Darby A.C."/>
            <person name="Veneti Z."/>
            <person name="Chen L."/>
            <person name="Braig H.R."/>
            <person name="Garrett R."/>
            <person name="Bourtzis K."/>
            <person name="Andersson S.G."/>
        </authorList>
    </citation>
    <scope>NUCLEOTIDE SEQUENCE [LARGE SCALE GENOMIC DNA]</scope>
    <source>
        <strain>wRi</strain>
    </source>
</reference>
<evidence type="ECO:0000255" key="1">
    <source>
        <dbReference type="HAMAP-Rule" id="MF_00014"/>
    </source>
</evidence>
<gene>
    <name evidence="1" type="primary">rimM</name>
    <name type="ordered locus">WRi_013090</name>
</gene>
<dbReference type="EMBL" id="CP001391">
    <property type="protein sequence ID" value="ACN95985.1"/>
    <property type="molecule type" value="Genomic_DNA"/>
</dbReference>
<dbReference type="RefSeq" id="WP_006279718.1">
    <property type="nucleotide sequence ID" value="NZ_MKIF01000109.1"/>
</dbReference>
<dbReference type="SMR" id="C0R4Z3"/>
<dbReference type="STRING" id="66084.WRi_013090"/>
<dbReference type="GeneID" id="70036747"/>
<dbReference type="KEGG" id="wri:WRi_013090"/>
<dbReference type="HOGENOM" id="CLU_077636_0_1_5"/>
<dbReference type="Proteomes" id="UP000001293">
    <property type="component" value="Chromosome"/>
</dbReference>
<dbReference type="GO" id="GO:0005737">
    <property type="term" value="C:cytoplasm"/>
    <property type="evidence" value="ECO:0007669"/>
    <property type="project" value="UniProtKB-SubCell"/>
</dbReference>
<dbReference type="GO" id="GO:0005840">
    <property type="term" value="C:ribosome"/>
    <property type="evidence" value="ECO:0007669"/>
    <property type="project" value="InterPro"/>
</dbReference>
<dbReference type="GO" id="GO:0043022">
    <property type="term" value="F:ribosome binding"/>
    <property type="evidence" value="ECO:0007669"/>
    <property type="project" value="InterPro"/>
</dbReference>
<dbReference type="GO" id="GO:0042274">
    <property type="term" value="P:ribosomal small subunit biogenesis"/>
    <property type="evidence" value="ECO:0007669"/>
    <property type="project" value="UniProtKB-UniRule"/>
</dbReference>
<dbReference type="GO" id="GO:0006364">
    <property type="term" value="P:rRNA processing"/>
    <property type="evidence" value="ECO:0007669"/>
    <property type="project" value="UniProtKB-UniRule"/>
</dbReference>
<dbReference type="Gene3D" id="2.30.30.240">
    <property type="entry name" value="PRC-barrel domain"/>
    <property type="match status" value="1"/>
</dbReference>
<dbReference type="Gene3D" id="2.40.30.60">
    <property type="entry name" value="RimM"/>
    <property type="match status" value="1"/>
</dbReference>
<dbReference type="HAMAP" id="MF_00014">
    <property type="entry name" value="Ribosome_mat_RimM"/>
    <property type="match status" value="1"/>
</dbReference>
<dbReference type="InterPro" id="IPR027275">
    <property type="entry name" value="PRC-brl_dom"/>
</dbReference>
<dbReference type="InterPro" id="IPR011033">
    <property type="entry name" value="PRC_barrel-like_sf"/>
</dbReference>
<dbReference type="InterPro" id="IPR011961">
    <property type="entry name" value="RimM"/>
</dbReference>
<dbReference type="InterPro" id="IPR002676">
    <property type="entry name" value="RimM_N"/>
</dbReference>
<dbReference type="InterPro" id="IPR036976">
    <property type="entry name" value="RimM_N_sf"/>
</dbReference>
<dbReference type="InterPro" id="IPR009000">
    <property type="entry name" value="Transl_B-barrel_sf"/>
</dbReference>
<dbReference type="NCBIfam" id="TIGR02273">
    <property type="entry name" value="16S_RimM"/>
    <property type="match status" value="1"/>
</dbReference>
<dbReference type="NCBIfam" id="NF011186">
    <property type="entry name" value="PRK14592.1"/>
    <property type="match status" value="1"/>
</dbReference>
<dbReference type="PANTHER" id="PTHR33692">
    <property type="entry name" value="RIBOSOME MATURATION FACTOR RIMM"/>
    <property type="match status" value="1"/>
</dbReference>
<dbReference type="PANTHER" id="PTHR33692:SF1">
    <property type="entry name" value="RIBOSOME MATURATION FACTOR RIMM"/>
    <property type="match status" value="1"/>
</dbReference>
<dbReference type="Pfam" id="PF05239">
    <property type="entry name" value="PRC"/>
    <property type="match status" value="1"/>
</dbReference>
<dbReference type="Pfam" id="PF01782">
    <property type="entry name" value="RimM"/>
    <property type="match status" value="1"/>
</dbReference>
<dbReference type="SUPFAM" id="SSF50346">
    <property type="entry name" value="PRC-barrel domain"/>
    <property type="match status" value="1"/>
</dbReference>
<dbReference type="SUPFAM" id="SSF50447">
    <property type="entry name" value="Translation proteins"/>
    <property type="match status" value="1"/>
</dbReference>
<accession>C0R4Z3</accession>
<feature type="chain" id="PRO_1000116590" description="Ribosome maturation factor RimM">
    <location>
        <begin position="1"/>
        <end position="168"/>
    </location>
</feature>
<feature type="domain" description="PRC barrel" evidence="1">
    <location>
        <begin position="92"/>
        <end position="167"/>
    </location>
</feature>
<comment type="function">
    <text evidence="1">An accessory protein needed during the final step in the assembly of 30S ribosomal subunit, possibly for assembly of the head region. Essential for efficient processing of 16S rRNA. May be needed both before and after RbfA during the maturation of 16S rRNA. It has affinity for free ribosomal 30S subunits but not for 70S ribosomes.</text>
</comment>
<comment type="subunit">
    <text evidence="1">Binds ribosomal protein uS19.</text>
</comment>
<comment type="subcellular location">
    <subcellularLocation>
        <location evidence="1">Cytoplasm</location>
    </subcellularLocation>
</comment>
<comment type="domain">
    <text evidence="1">The PRC barrel domain binds ribosomal protein uS19.</text>
</comment>
<comment type="similarity">
    <text evidence="1">Belongs to the RimM family.</text>
</comment>
<keyword id="KW-0143">Chaperone</keyword>
<keyword id="KW-0963">Cytoplasm</keyword>
<keyword id="KW-0690">Ribosome biogenesis</keyword>
<keyword id="KW-0698">rRNA processing</keyword>